<reference key="1">
    <citation type="journal article" date="1997" name="Biochim. Biophys. Acta">
        <title>Characterization of a cartilage-derived 66-kDa protein (RGD-CAP/beta ig-h3) that binds to collagen.</title>
        <authorList>
            <person name="Hashimoto K."/>
            <person name="Noshiro M."/>
            <person name="Ohno S."/>
            <person name="Kawamoto T."/>
            <person name="Satakeda H."/>
            <person name="Akagawa Y."/>
            <person name="Nakashima K."/>
            <person name="Okimura A."/>
            <person name="Ishida H."/>
            <person name="Okamoto T."/>
            <person name="Pan H."/>
            <person name="Shen M."/>
            <person name="Yan W."/>
            <person name="Kato Y."/>
        </authorList>
    </citation>
    <scope>NUCLEOTIDE SEQUENCE [MRNA]</scope>
    <scope>PROTEIN SEQUENCE OF 24-41</scope>
    <scope>INTERACTION WITH COLLAGEN</scope>
    <scope>INDUCTION</scope>
    <scope>TISSUE SPECIFICITY</scope>
    <scope>DEVELOPMENTAL STAGE</scope>
    <source>
        <tissue>Chondrocyte</tissue>
    </source>
</reference>
<gene>
    <name type="primary">TGFBI</name>
</gene>
<dbReference type="EMBL" id="D55717">
    <property type="protein sequence ID" value="BAA20089.1"/>
    <property type="molecule type" value="mRNA"/>
</dbReference>
<dbReference type="SMR" id="O11780"/>
<dbReference type="FunCoup" id="O11780">
    <property type="interactions" value="108"/>
</dbReference>
<dbReference type="STRING" id="9823.ENSSSCP00000015228"/>
<dbReference type="PaxDb" id="9823-ENSSSCP00000015228"/>
<dbReference type="PeptideAtlas" id="O11780"/>
<dbReference type="eggNOG" id="KOG1437">
    <property type="taxonomic scope" value="Eukaryota"/>
</dbReference>
<dbReference type="InParanoid" id="O11780"/>
<dbReference type="Proteomes" id="UP000008227">
    <property type="component" value="Unplaced"/>
</dbReference>
<dbReference type="Proteomes" id="UP000314985">
    <property type="component" value="Unplaced"/>
</dbReference>
<dbReference type="Proteomes" id="UP000694570">
    <property type="component" value="Unplaced"/>
</dbReference>
<dbReference type="Proteomes" id="UP000694571">
    <property type="component" value="Unplaced"/>
</dbReference>
<dbReference type="Proteomes" id="UP000694720">
    <property type="component" value="Unplaced"/>
</dbReference>
<dbReference type="Proteomes" id="UP000694722">
    <property type="component" value="Unplaced"/>
</dbReference>
<dbReference type="Proteomes" id="UP000694723">
    <property type="component" value="Unplaced"/>
</dbReference>
<dbReference type="Proteomes" id="UP000694724">
    <property type="component" value="Unplaced"/>
</dbReference>
<dbReference type="Proteomes" id="UP000694725">
    <property type="component" value="Unplaced"/>
</dbReference>
<dbReference type="Proteomes" id="UP000694726">
    <property type="component" value="Unplaced"/>
</dbReference>
<dbReference type="Proteomes" id="UP000694727">
    <property type="component" value="Unplaced"/>
</dbReference>
<dbReference type="Proteomes" id="UP000694728">
    <property type="component" value="Unplaced"/>
</dbReference>
<dbReference type="GO" id="GO:0031012">
    <property type="term" value="C:extracellular matrix"/>
    <property type="evidence" value="ECO:0000318"/>
    <property type="project" value="GO_Central"/>
</dbReference>
<dbReference type="GO" id="GO:0005615">
    <property type="term" value="C:extracellular space"/>
    <property type="evidence" value="ECO:0000318"/>
    <property type="project" value="GO_Central"/>
</dbReference>
<dbReference type="GO" id="GO:0050839">
    <property type="term" value="F:cell adhesion molecule binding"/>
    <property type="evidence" value="ECO:0000318"/>
    <property type="project" value="GO_Central"/>
</dbReference>
<dbReference type="GO" id="GO:0007155">
    <property type="term" value="P:cell adhesion"/>
    <property type="evidence" value="ECO:0000318"/>
    <property type="project" value="GO_Central"/>
</dbReference>
<dbReference type="GO" id="GO:0030198">
    <property type="term" value="P:extracellular matrix organization"/>
    <property type="evidence" value="ECO:0000318"/>
    <property type="project" value="GO_Central"/>
</dbReference>
<dbReference type="FunFam" id="2.30.180.10:FF:000001">
    <property type="entry name" value="periostin isoform X1"/>
    <property type="match status" value="1"/>
</dbReference>
<dbReference type="FunFam" id="2.30.180.10:FF:000002">
    <property type="entry name" value="periostin isoform X1"/>
    <property type="match status" value="1"/>
</dbReference>
<dbReference type="FunFam" id="2.30.180.10:FF:000003">
    <property type="entry name" value="periostin isoform X1"/>
    <property type="match status" value="1"/>
</dbReference>
<dbReference type="FunFam" id="2.30.180.10:FF:000007">
    <property type="entry name" value="Transforming growth factor-beta-induced protein ig-h3"/>
    <property type="match status" value="1"/>
</dbReference>
<dbReference type="Gene3D" id="2.30.180.10">
    <property type="entry name" value="FAS1 domain"/>
    <property type="match status" value="4"/>
</dbReference>
<dbReference type="InterPro" id="IPR050904">
    <property type="entry name" value="Adhesion/Biosynth-related"/>
</dbReference>
<dbReference type="InterPro" id="IPR011489">
    <property type="entry name" value="EMI_domain"/>
</dbReference>
<dbReference type="InterPro" id="IPR036378">
    <property type="entry name" value="FAS1_dom_sf"/>
</dbReference>
<dbReference type="InterPro" id="IPR000782">
    <property type="entry name" value="FAS1_domain"/>
</dbReference>
<dbReference type="InterPro" id="IPR016666">
    <property type="entry name" value="TGFBI/POSTN"/>
</dbReference>
<dbReference type="PANTHER" id="PTHR10900">
    <property type="entry name" value="PERIOSTIN-RELATED"/>
    <property type="match status" value="1"/>
</dbReference>
<dbReference type="PANTHER" id="PTHR10900:SF82">
    <property type="entry name" value="TRANSFORMING GROWTH FACTOR-BETA-INDUCED PROTEIN IG-H3"/>
    <property type="match status" value="1"/>
</dbReference>
<dbReference type="Pfam" id="PF02469">
    <property type="entry name" value="Fasciclin"/>
    <property type="match status" value="4"/>
</dbReference>
<dbReference type="PIRSF" id="PIRSF016553">
    <property type="entry name" value="BIGH3_OSF2"/>
    <property type="match status" value="1"/>
</dbReference>
<dbReference type="SMART" id="SM00554">
    <property type="entry name" value="FAS1"/>
    <property type="match status" value="4"/>
</dbReference>
<dbReference type="SUPFAM" id="SSF82153">
    <property type="entry name" value="FAS1 domain"/>
    <property type="match status" value="4"/>
</dbReference>
<dbReference type="PROSITE" id="PS51041">
    <property type="entry name" value="EMI"/>
    <property type="match status" value="1"/>
</dbReference>
<dbReference type="PROSITE" id="PS50213">
    <property type="entry name" value="FAS1"/>
    <property type="match status" value="4"/>
</dbReference>
<comment type="function">
    <text evidence="1 5">Plays a role in cell adhesion (By similarity). May play a role in cell-collagen interactions (PubMed:9061001).</text>
</comment>
<comment type="subunit">
    <text evidence="5">Binds to type I, II, and IV collagens (PubMed:9061001).</text>
</comment>
<comment type="subcellular location">
    <subcellularLocation>
        <location evidence="1">Secreted</location>
    </subcellularLocation>
    <subcellularLocation>
        <location evidence="5">Secreted</location>
        <location evidence="5">Extracellular space</location>
        <location evidence="5">Extracellular matrix</location>
    </subcellularLocation>
    <text evidence="1">May be associated both with microfibrils and with the cell surface.</text>
</comment>
<comment type="tissue specificity">
    <text evidence="5">Widely distributed in various tissues except for the brain. High levels in corneal epithelium (PubMed:9061001).</text>
</comment>
<comment type="developmental stage">
    <text evidence="5">Expressed in chondrocytes during all stages (PubMed:9061001). Highest levels during the prehypertrophic stage (PubMed:9061001).</text>
</comment>
<comment type="induction">
    <text evidence="5">By TGF-beta (PubMed:9061001).</text>
</comment>
<comment type="PTM">
    <text evidence="1">Gamma-carboxyglutamated; gamma-carboxyglutamate residues are formed by vitamin K dependent carboxylation; these residues may be required for binding to calcium. According to a report, does not contain any vitamin K-dependent gamma-carboxyglutamate residues.</text>
</comment>
<comment type="PTM">
    <text evidence="1">The EMI domain contains 2 expected intradomain disulfide bridges (Cys-49-Cys85 and Cys-84-Cys-97) and one unusual interdomain disulfide bridge to the second FAS1 domain (Cys-74-Cys-339). This arrangement violates the predicted disulfide bridge pattern of an EMI domain.</text>
</comment>
<keyword id="KW-0130">Cell adhesion</keyword>
<keyword id="KW-0903">Direct protein sequencing</keyword>
<keyword id="KW-1015">Disulfide bond</keyword>
<keyword id="KW-0272">Extracellular matrix</keyword>
<keyword id="KW-0301">Gamma-carboxyglutamic acid</keyword>
<keyword id="KW-0597">Phosphoprotein</keyword>
<keyword id="KW-1185">Reference proteome</keyword>
<keyword id="KW-0677">Repeat</keyword>
<keyword id="KW-0964">Secreted</keyword>
<keyword id="KW-0732">Signal</keyword>
<name>BGH3_PIG</name>
<proteinExistence type="evidence at protein level"/>
<organism>
    <name type="scientific">Sus scrofa</name>
    <name type="common">Pig</name>
    <dbReference type="NCBI Taxonomy" id="9823"/>
    <lineage>
        <taxon>Eukaryota</taxon>
        <taxon>Metazoa</taxon>
        <taxon>Chordata</taxon>
        <taxon>Craniata</taxon>
        <taxon>Vertebrata</taxon>
        <taxon>Euteleostomi</taxon>
        <taxon>Mammalia</taxon>
        <taxon>Eutheria</taxon>
        <taxon>Laurasiatheria</taxon>
        <taxon>Artiodactyla</taxon>
        <taxon>Suina</taxon>
        <taxon>Suidae</taxon>
        <taxon>Sus</taxon>
    </lineage>
</organism>
<accession>O11780</accession>
<sequence>MALLGRLLPLALALALGPAATHAGPAKSPYQLVLQHSRLRGRQHGPNVCAVQKLIGTNKKYFTNCKQWYQRKICGKSTVISYECCPGYEKVPGEKGCPAVLPLSNLYETLGVVGSTTTQLYTDRTEKLRPEMEGPGSFTIFAPSNEAWASLPAEVLDSLVSNVNIELLNALRYHMVDRRVLTDELKHGMALTSMYQNSNIQIHHYPNGIVTVNCARLLKADHHATNGVVHLIDKVISTVTNNIQQIIEIEDTFETLRAAVAASGLNTLLEGDGQYTLLAPSNEAFEKIPAETLNRILGDPEALRDLLNNHILKSAMCAEAIVAGLSLETLEGTTLEVGCSGDMLTINGKPIISNKDVLATNGVIHFIDELLIPDSAKTLFELAAESDVSTAVDLFRQAGLGSHLSGNERLTLLAPMNSVFKDGTPRIDARTKNLLLNHMIKDQLASKYLYHGQTLDTLGGKKLRVFVYRNSLCIENSCIAAHDKRGRYGTLFTMDRMLTPPMGTVMDVLKGDNRFSMLVAAIQSAGLTETLNREGVYTVFAPTNEAFQALPLGERNKLLGNAKELANILKYHVGDEILVSGGIGALVRLKSLQGDKLEVSSKNSLVTVNKEPVAEADIMATNGVVHTINTVLRPPANKPQERGDELADSALEIFKQASAFSRATQSSVKLAPVYQRLLERMKH</sequence>
<feature type="signal peptide" evidence="5">
    <location>
        <begin position="1"/>
        <end position="23"/>
    </location>
</feature>
<feature type="chain" id="PRO_0000008770" description="Transforming growth factor-beta-induced protein ig-h3" evidence="5">
    <location>
        <begin position="24"/>
        <end position="683"/>
    </location>
</feature>
<feature type="domain" description="EMI" evidence="4">
    <location>
        <begin position="45"/>
        <end position="99"/>
    </location>
</feature>
<feature type="domain" description="FAS1 1" evidence="3">
    <location>
        <begin position="103"/>
        <end position="236"/>
    </location>
</feature>
<feature type="domain" description="FAS1 2" evidence="3">
    <location>
        <begin position="240"/>
        <end position="371"/>
    </location>
</feature>
<feature type="domain" description="FAS1 3" evidence="3">
    <location>
        <begin position="375"/>
        <end position="498"/>
    </location>
</feature>
<feature type="domain" description="FAS1 4" evidence="3">
    <location>
        <begin position="502"/>
        <end position="632"/>
    </location>
</feature>
<feature type="short sequence motif" description="Cell attachment site" evidence="2">
    <location>
        <begin position="642"/>
        <end position="644"/>
    </location>
</feature>
<feature type="modified residue" description="Phosphoserine" evidence="1">
    <location>
        <position position="37"/>
    </location>
</feature>
<feature type="modified residue" description="S-cysteinyl cysteine" evidence="1">
    <location>
        <position position="65"/>
    </location>
</feature>
<feature type="disulfide bond" evidence="1">
    <location>
        <begin position="49"/>
        <end position="85"/>
    </location>
</feature>
<feature type="disulfide bond" evidence="1">
    <location>
        <begin position="74"/>
        <end position="339"/>
    </location>
</feature>
<feature type="disulfide bond" evidence="1">
    <location>
        <begin position="84"/>
        <end position="97"/>
    </location>
</feature>
<feature type="disulfide bond" evidence="1">
    <location>
        <begin position="214"/>
        <end position="317"/>
    </location>
</feature>
<feature type="disulfide bond" evidence="1">
    <location>
        <begin position="473"/>
        <end position="478"/>
    </location>
</feature>
<evidence type="ECO:0000250" key="1">
    <source>
        <dbReference type="UniProtKB" id="Q15582"/>
    </source>
</evidence>
<evidence type="ECO:0000255" key="2"/>
<evidence type="ECO:0000255" key="3">
    <source>
        <dbReference type="PROSITE-ProRule" id="PRU00082"/>
    </source>
</evidence>
<evidence type="ECO:0000255" key="4">
    <source>
        <dbReference type="PROSITE-ProRule" id="PRU00384"/>
    </source>
</evidence>
<evidence type="ECO:0000269" key="5">
    <source>
    </source>
</evidence>
<protein>
    <recommendedName>
        <fullName>Transforming growth factor-beta-induced protein ig-h3</fullName>
        <shortName>Beta ig-h3</shortName>
    </recommendedName>
    <alternativeName>
        <fullName>Kerato-epithelin</fullName>
    </alternativeName>
    <alternativeName>
        <fullName>RGD-containing collagen-associated protein</fullName>
        <shortName>RGD-CAP</shortName>
    </alternativeName>
</protein>